<name>SHH_PUNTE</name>
<organism>
    <name type="scientific">Puntigrus tetrazona</name>
    <name type="common">Sumatra barb</name>
    <name type="synonym">Puntius tetrazona</name>
    <dbReference type="NCBI Taxonomy" id="1606681"/>
    <lineage>
        <taxon>Eukaryota</taxon>
        <taxon>Metazoa</taxon>
        <taxon>Chordata</taxon>
        <taxon>Craniata</taxon>
        <taxon>Vertebrata</taxon>
        <taxon>Euteleostomi</taxon>
        <taxon>Actinopterygii</taxon>
        <taxon>Neopterygii</taxon>
        <taxon>Teleostei</taxon>
        <taxon>Ostariophysi</taxon>
        <taxon>Cypriniformes</taxon>
        <taxon>Cyprinidae</taxon>
        <taxon>Smiliogastrinae</taxon>
        <taxon>Puntigrus</taxon>
    </lineage>
</organism>
<dbReference type="EMBL" id="U51352">
    <property type="protein sequence ID" value="AAB38577.1"/>
    <property type="molecule type" value="Genomic_DNA"/>
</dbReference>
<dbReference type="EMBL" id="U51371">
    <property type="protein sequence ID" value="AAB38596.1"/>
    <property type="molecule type" value="Genomic_DNA"/>
</dbReference>
<dbReference type="SMR" id="P79850"/>
<dbReference type="GO" id="GO:0005615">
    <property type="term" value="C:extracellular space"/>
    <property type="evidence" value="ECO:0007669"/>
    <property type="project" value="TreeGrafter"/>
</dbReference>
<dbReference type="GO" id="GO:0005886">
    <property type="term" value="C:plasma membrane"/>
    <property type="evidence" value="ECO:0007669"/>
    <property type="project" value="UniProtKB-SubCell"/>
</dbReference>
<dbReference type="GO" id="GO:0005509">
    <property type="term" value="F:calcium ion binding"/>
    <property type="evidence" value="ECO:0007669"/>
    <property type="project" value="TreeGrafter"/>
</dbReference>
<dbReference type="GO" id="GO:0005113">
    <property type="term" value="F:patched binding"/>
    <property type="evidence" value="ECO:0007669"/>
    <property type="project" value="TreeGrafter"/>
</dbReference>
<dbReference type="GO" id="GO:0008233">
    <property type="term" value="F:peptidase activity"/>
    <property type="evidence" value="ECO:0007669"/>
    <property type="project" value="UniProtKB-KW"/>
</dbReference>
<dbReference type="GO" id="GO:0048513">
    <property type="term" value="P:animal organ development"/>
    <property type="evidence" value="ECO:0007669"/>
    <property type="project" value="UniProtKB-ARBA"/>
</dbReference>
<dbReference type="GO" id="GO:0048468">
    <property type="term" value="P:cell development"/>
    <property type="evidence" value="ECO:0007669"/>
    <property type="project" value="UniProtKB-ARBA"/>
</dbReference>
<dbReference type="GO" id="GO:0001708">
    <property type="term" value="P:cell fate specification"/>
    <property type="evidence" value="ECO:0007669"/>
    <property type="project" value="TreeGrafter"/>
</dbReference>
<dbReference type="GO" id="GO:0007267">
    <property type="term" value="P:cell-cell signaling"/>
    <property type="evidence" value="ECO:0007669"/>
    <property type="project" value="InterPro"/>
</dbReference>
<dbReference type="GO" id="GO:0007417">
    <property type="term" value="P:central nervous system development"/>
    <property type="evidence" value="ECO:0007669"/>
    <property type="project" value="UniProtKB-ARBA"/>
</dbReference>
<dbReference type="GO" id="GO:0030182">
    <property type="term" value="P:neuron differentiation"/>
    <property type="evidence" value="ECO:0007669"/>
    <property type="project" value="UniProtKB-ARBA"/>
</dbReference>
<dbReference type="GO" id="GO:0006508">
    <property type="term" value="P:proteolysis"/>
    <property type="evidence" value="ECO:0007669"/>
    <property type="project" value="UniProtKB-KW"/>
</dbReference>
<dbReference type="GO" id="GO:0010468">
    <property type="term" value="P:regulation of gene expression"/>
    <property type="evidence" value="ECO:0007669"/>
    <property type="project" value="TreeGrafter"/>
</dbReference>
<dbReference type="GO" id="GO:0007224">
    <property type="term" value="P:smoothened signaling pathway"/>
    <property type="evidence" value="ECO:0007669"/>
    <property type="project" value="TreeGrafter"/>
</dbReference>
<dbReference type="GO" id="GO:0009888">
    <property type="term" value="P:tissue development"/>
    <property type="evidence" value="ECO:0007669"/>
    <property type="project" value="UniProtKB-ARBA"/>
</dbReference>
<dbReference type="Gene3D" id="3.30.1380.10">
    <property type="match status" value="1"/>
</dbReference>
<dbReference type="InterPro" id="IPR001657">
    <property type="entry name" value="Hedgehog"/>
</dbReference>
<dbReference type="InterPro" id="IPR009045">
    <property type="entry name" value="Hedgehog_sig/DD-Pept_Zn-bd_sf"/>
</dbReference>
<dbReference type="InterPro" id="IPR050387">
    <property type="entry name" value="Hedgehog_Signaling"/>
</dbReference>
<dbReference type="InterPro" id="IPR000320">
    <property type="entry name" value="Hedgehog_signalling_dom"/>
</dbReference>
<dbReference type="PANTHER" id="PTHR11889">
    <property type="entry name" value="HEDGEHOG"/>
    <property type="match status" value="1"/>
</dbReference>
<dbReference type="PANTHER" id="PTHR11889:SF36">
    <property type="entry name" value="SONIC HEDGEHOG PROTEIN"/>
    <property type="match status" value="1"/>
</dbReference>
<dbReference type="Pfam" id="PF01085">
    <property type="entry name" value="HH_signal"/>
    <property type="match status" value="1"/>
</dbReference>
<dbReference type="PRINTS" id="PR00632">
    <property type="entry name" value="SONICHHOG"/>
</dbReference>
<dbReference type="SUPFAM" id="SSF55166">
    <property type="entry name" value="Hedgehog/DD-peptidase"/>
    <property type="match status" value="1"/>
</dbReference>
<gene>
    <name type="primary">shh</name>
</gene>
<keyword id="KW-0068">Autocatalytic cleavage</keyword>
<keyword id="KW-0106">Calcium</keyword>
<keyword id="KW-1003">Cell membrane</keyword>
<keyword id="KW-0217">Developmental protein</keyword>
<keyword id="KW-0378">Hydrolase</keyword>
<keyword id="KW-0449">Lipoprotein</keyword>
<keyword id="KW-0472">Membrane</keyword>
<keyword id="KW-0479">Metal-binding</keyword>
<keyword id="KW-0564">Palmitate</keyword>
<keyword id="KW-0645">Protease</keyword>
<keyword id="KW-0964">Secreted</keyword>
<keyword id="KW-0862">Zinc</keyword>
<accession>P79850</accession>
<accession>P79851</accession>
<feature type="chain" id="PRO_0000058734" description="Sonic hedgehog protein">
    <location>
        <begin position="1" status="less than"/>
        <end position="121" status="greater than"/>
    </location>
</feature>
<feature type="binding site" evidence="2">
    <location>
        <position position="60"/>
    </location>
    <ligand>
        <name>Ca(2+)</name>
        <dbReference type="ChEBI" id="CHEBI:29108"/>
        <label>1</label>
    </ligand>
</feature>
<feature type="binding site" evidence="2">
    <location>
        <position position="61"/>
    </location>
    <ligand>
        <name>Ca(2+)</name>
        <dbReference type="ChEBI" id="CHEBI:29108"/>
        <label>1</label>
    </ligand>
</feature>
<feature type="binding site" evidence="2">
    <location>
        <position position="61"/>
    </location>
    <ligand>
        <name>Ca(2+)</name>
        <dbReference type="ChEBI" id="CHEBI:29108"/>
        <label>2</label>
    </ligand>
</feature>
<feature type="binding site" evidence="2">
    <location>
        <position position="76"/>
    </location>
    <ligand>
        <name>Ca(2+)</name>
        <dbReference type="ChEBI" id="CHEBI:29108"/>
        <label>1</label>
    </ligand>
</feature>
<feature type="binding site" evidence="2">
    <location>
        <position position="77"/>
    </location>
    <ligand>
        <name>Ca(2+)</name>
        <dbReference type="ChEBI" id="CHEBI:29108"/>
        <label>1</label>
    </ligand>
</feature>
<feature type="binding site" evidence="2">
    <location>
        <position position="77"/>
    </location>
    <ligand>
        <name>Ca(2+)</name>
        <dbReference type="ChEBI" id="CHEBI:29108"/>
        <label>2</label>
    </ligand>
</feature>
<feature type="binding site" evidence="2">
    <location>
        <position position="80"/>
    </location>
    <ligand>
        <name>Ca(2+)</name>
        <dbReference type="ChEBI" id="CHEBI:29108"/>
        <label>2</label>
    </ligand>
</feature>
<feature type="binding site" evidence="2">
    <location>
        <position position="82"/>
    </location>
    <ligand>
        <name>Ca(2+)</name>
        <dbReference type="ChEBI" id="CHEBI:29108"/>
        <label>2</label>
    </ligand>
</feature>
<feature type="binding site" evidence="2">
    <location>
        <position position="91"/>
    </location>
    <ligand>
        <name>Zn(2+)</name>
        <dbReference type="ChEBI" id="CHEBI:29105"/>
    </ligand>
</feature>
<feature type="binding site" evidence="2">
    <location>
        <position position="98"/>
    </location>
    <ligand>
        <name>Zn(2+)</name>
        <dbReference type="ChEBI" id="CHEBI:29105"/>
    </ligand>
</feature>
<feature type="non-consecutive residues" evidence="3">
    <location>
        <begin position="63"/>
        <end position="64"/>
    </location>
</feature>
<feature type="non-terminal residue">
    <location>
        <position position="1"/>
    </location>
</feature>
<feature type="non-terminal residue">
    <location>
        <position position="121"/>
    </location>
</feature>
<proteinExistence type="inferred from homology"/>
<protein>
    <recommendedName>
        <fullName>Sonic hedgehog protein</fullName>
        <shortName>SHH</shortName>
    </recommendedName>
</protein>
<reference key="1">
    <citation type="journal article" date="1996" name="Proc. Natl. Acad. Sci. U.S.A.">
        <title>Evolutionary analyses of hedgehog and Hoxd-10 genes in fish species closely related to the zebrafish.</title>
        <authorList>
            <person name="Zardoya R."/>
            <person name="Abouheif E."/>
            <person name="Meyer A."/>
        </authorList>
    </citation>
    <scope>NUCLEOTIDE SEQUENCE [GENOMIC DNA]</scope>
    <source>
        <tissue>Muscle</tissue>
    </source>
</reference>
<evidence type="ECO:0000250" key="1"/>
<evidence type="ECO:0000250" key="2">
    <source>
        <dbReference type="UniProtKB" id="Q15465"/>
    </source>
</evidence>
<evidence type="ECO:0000305" key="3"/>
<sequence length="121" mass="14003">YGRRRHPKKLTPLAYKQFIPNVAEKTLGASGRYEGKITRNSERFKELTPNYNPDIIFKDEENTVMNQWPGVKLRVTEGWDEDGHHFEESLHYEGRAVDITTSDRDKSKYGTLSRLAVEAGF</sequence>
<comment type="function">
    <text evidence="1">Intercellular signal essential for a variety of patterning events during development. Signal produced by the notochord that induces somite patterning, dorso-ventral patterning of the brain and early patterning of the developing eyes. Displays floor plate-inducing activity. Binds to the patched (PTC) receptor, which functions in association with smoothened (SMO), to activate the transcription of target genes. In the absence of SHH, PTC represses the constitutive signaling activity of SMO (By similarity).</text>
</comment>
<comment type="subunit">
    <text evidence="1">N-product is active as a multimer.</text>
</comment>
<comment type="subcellular location">
    <subcellularLocation>
        <location evidence="1">Secreted</location>
    </subcellularLocation>
    <subcellularLocation>
        <location evidence="1">Cell membrane</location>
    </subcellularLocation>
    <text evidence="1">Sonic hedgehog protein C-product: Secreted, extracellular space. Sonic hedgehog protein N-product: Cell membrane; Lipid-anchor. The C-terminal peptide diffuses from the cell, while the N-product either remains associated with lipid rafts at the cell surface, or forms freely diffusible active multimers with its hydrophobic lipid-modified N- and C-termini buried inside.</text>
</comment>
<comment type="domain">
    <text evidence="1">The sonic hedgehog protein N-product binds calcium and zinc ions; this stabilizes the protein fold and is essential for protein-protein interactions mediated by this domain.</text>
</comment>
<comment type="PTM">
    <text>The C-terminal domain displays an autoproteolysis activity and a cholesterol transferase activity. Both activities result in the cleavage of the full-length protein and covalent attachment of a cholesterol moiety to the C-terminal of the newly generated N-terminal fragment (N-product). The N-product is the active species in both local and long-range signaling, whereas the C-product has no signaling activity.</text>
</comment>
<comment type="PTM">
    <text evidence="1">Cholesterylation is required for N-product targeting to lipid rafts and multimerization.</text>
</comment>
<comment type="PTM">
    <text evidence="1">N-palmitoylation is required for N-product multimerization and full activity.</text>
</comment>
<comment type="similarity">
    <text evidence="3">Belongs to the hedgehog family.</text>
</comment>